<feature type="chain" id="PRO_0000288546" description="Beta-1,3-galactosyl-O-glycosyl-glycoprotein beta-1,6-N-acetylglucosaminyltransferase 3">
    <location>
        <begin position="1"/>
        <end position="437"/>
    </location>
</feature>
<feature type="topological domain" description="Cytoplasmic" evidence="3">
    <location>
        <begin position="1"/>
        <end position="12"/>
    </location>
</feature>
<feature type="transmembrane region" description="Helical; Signal-anchor for type II membrane protein" evidence="3">
    <location>
        <begin position="13"/>
        <end position="30"/>
    </location>
</feature>
<feature type="topological domain" description="Lumenal" evidence="3">
    <location>
        <begin position="31"/>
        <end position="437"/>
    </location>
</feature>
<feature type="glycosylation site" description="N-linked (GlcNAc...) asparagine" evidence="3">
    <location>
        <position position="288"/>
    </location>
</feature>
<feature type="disulfide bond" evidence="1">
    <location>
        <begin position="70"/>
        <end position="227"/>
    </location>
</feature>
<feature type="disulfide bond" evidence="1">
    <location>
        <begin position="161"/>
        <end position="381"/>
    </location>
</feature>
<feature type="disulfide bond" evidence="1">
    <location>
        <begin position="182"/>
        <end position="209"/>
    </location>
</feature>
<feature type="disulfide bond" evidence="1">
    <location>
        <begin position="390"/>
        <end position="422"/>
    </location>
</feature>
<feature type="sequence conflict" description="In Ref. 1; AAK72480." evidence="4" ref="1">
    <original>A</original>
    <variation>G</variation>
    <location>
        <position position="101"/>
    </location>
</feature>
<feature type="sequence conflict" description="In Ref. 3; BAB25548." evidence="4" ref="3">
    <original>L</original>
    <variation>M</variation>
    <location>
        <position position="353"/>
    </location>
</feature>
<keyword id="KW-1015">Disulfide bond</keyword>
<keyword id="KW-0325">Glycoprotein</keyword>
<keyword id="KW-0328">Glycosyltransferase</keyword>
<keyword id="KW-0333">Golgi apparatus</keyword>
<keyword id="KW-0472">Membrane</keyword>
<keyword id="KW-1185">Reference proteome</keyword>
<keyword id="KW-0735">Signal-anchor</keyword>
<keyword id="KW-0808">Transferase</keyword>
<keyword id="KW-0812">Transmembrane</keyword>
<keyword id="KW-1133">Transmembrane helix</keyword>
<name>GCNT3_MOUSE</name>
<protein>
    <recommendedName>
        <fullName>Beta-1,3-galactosyl-O-glycosyl-glycoprotein beta-1,6-N-acetylglucosaminyltransferase 3</fullName>
        <ecNumber evidence="2">2.4.1.102</ecNumber>
        <ecNumber evidence="2">2.4.1.148</ecNumber>
        <ecNumber evidence="2">2.4.1.150</ecNumber>
    </recommendedName>
    <alternativeName>
        <fullName>C2GnT-mucin type</fullName>
        <shortName>C2GnT-M</shortName>
    </alternativeName>
    <alternativeName>
        <fullName>Mucus-type core 2 beta-1,6-N-acetylglucosaminyltransferase</fullName>
    </alternativeName>
</protein>
<gene>
    <name type="primary">Gcnt3</name>
</gene>
<sequence length="437" mass="50698">MTSWQRLCWHYRLWTLGCYMLLAILALKLSLRLKCDFDAMDLDSEEFQSQYCRDLLYKTLKLPAKSSINCSGVIRGEQKAVTQALLNNLEIKKKQQLFTEADYLRMTADCEHFKTKRKFIQVPLSKEEASFPIAYSMVVHEKIENFERLLRAVYTPQNVYCVHMDQKSSEPFKQAVRAIVSCFPNVFIASKLVSVVYASWSRVQADLNCMEDLLQSPVPWKYLLNTCGTDFPIKTNAEMVKALKLLKGQNSMESEVPPPHKKSRWKYHYEVTDTLHMTSKRKTPPPNNLTMFTGNAYMVASRDFIEHVFSNSKARQLIEWVKDTYSPDEHLWATLQRASWMPGSDPLHRKFDLSDMRAIARLTKWYDHEGDIENGAPYTSCSGIHQRAVCVYGSGDLHWILQNHHLLANKFDPKVDDNVLQCLEEYLRHKAIYGTEL</sequence>
<comment type="function">
    <text evidence="2">Glycosyltransferase that can synthesize all known mucin beta 6 N-acetylglucosaminides. Mediates core 2 and core 4 O-glycan branching, 2 important steps in mucin-type biosynthesis. Also has I-branching enzyme activity by converting linear into branched poly-N-acetyllactosaminoglycans, leading to introduce the blood group I antigen during embryonic development.</text>
</comment>
<comment type="catalytic activity">
    <reaction evidence="2">
        <text>a 3-O-[beta-D-galactosyl-(1-&gt;3)-N-acetyl-alpha-D-galactosaminyl]-L-seryl-[protein] + UDP-N-acetyl-alpha-D-glucosamine = 3-O-{beta-D-galactosyl-(1-&gt;3)-[N-acetyl-beta-D-glucosaminyl-(1-&gt;6)]-N-acetyl-alpha-D-galactosaminyl}-L-seryl-[protein] + UDP + H(+)</text>
        <dbReference type="Rhea" id="RHEA:56212"/>
        <dbReference type="Rhea" id="RHEA-COMP:13922"/>
        <dbReference type="Rhea" id="RHEA-COMP:14419"/>
        <dbReference type="ChEBI" id="CHEBI:15378"/>
        <dbReference type="ChEBI" id="CHEBI:57705"/>
        <dbReference type="ChEBI" id="CHEBI:58223"/>
        <dbReference type="ChEBI" id="CHEBI:137949"/>
        <dbReference type="ChEBI" id="CHEBI:139605"/>
        <dbReference type="EC" id="2.4.1.102"/>
    </reaction>
</comment>
<comment type="catalytic activity">
    <reaction evidence="2">
        <text>a 3-O-[beta-D-galactosyl-(1-&gt;3)-N-acetyl-alpha-D-galactosaminyl]-L-threonyl-[protein] + UDP-N-acetyl-alpha-D-glucosamine = a 3-O-{beta-D-galactosyl-(1-&gt;3)-[N-acetyl-beta-D-glucosaminyl-(1-&gt;6)]-N-acetyl-alpha-D-galactosaminyl}-L-threonyl-[protein] + UDP + H(+)</text>
        <dbReference type="Rhea" id="RHEA:56216"/>
        <dbReference type="Rhea" id="RHEA-COMP:13923"/>
        <dbReference type="Rhea" id="RHEA-COMP:14420"/>
        <dbReference type="ChEBI" id="CHEBI:15378"/>
        <dbReference type="ChEBI" id="CHEBI:57705"/>
        <dbReference type="ChEBI" id="CHEBI:58223"/>
        <dbReference type="ChEBI" id="CHEBI:137950"/>
        <dbReference type="ChEBI" id="CHEBI:139607"/>
        <dbReference type="EC" id="2.4.1.102"/>
    </reaction>
</comment>
<comment type="catalytic activity">
    <reaction evidence="2">
        <text>a beta-D-Gal-(1-&gt;4)-beta-D-GlcNAc-(1-&gt;3)-beta-D-Gal-(1-&gt;4)-beta-D-GlcNAc derivative + UDP-N-acetyl-alpha-D-glucosamine = a beta-D-Gal-(1-&gt;4)-beta-D-GlcNAc-(1-&gt;3)-[beta-D-GlcNAc-(1-&gt;6)]-beta-D-Gal-(1-&gt;4)-N-acetyl-beta-D-glucosaminyl derivative + UDP + H(+)</text>
        <dbReference type="Rhea" id="RHEA:54820"/>
        <dbReference type="ChEBI" id="CHEBI:15378"/>
        <dbReference type="ChEBI" id="CHEBI:57705"/>
        <dbReference type="ChEBI" id="CHEBI:58223"/>
        <dbReference type="ChEBI" id="CHEBI:138371"/>
        <dbReference type="ChEBI" id="CHEBI:138372"/>
        <dbReference type="EC" id="2.4.1.150"/>
    </reaction>
</comment>
<comment type="catalytic activity">
    <reaction evidence="2">
        <text>3-O-[N-acetyl-beta-D-glucosaminyl-(1-&gt;3)-N-acetyl-alpha-D-galactosaminyl]-L-seryl-[protein] + UDP-N-acetyl-alpha-D-glucosamine = 3-O-[N-acetyl-beta-D-glucosaminyl-(1-&gt;3)-[N-acetyl-beta-D-glucosaminyl-(1-&gt;6)]-N-acetyl-alpha-D-galactosaminyl]-L-seryl-[protein] + UDP + H(+)</text>
        <dbReference type="Rhea" id="RHEA:56188"/>
        <dbReference type="Rhea" id="RHEA-COMP:11691"/>
        <dbReference type="Rhea" id="RHEA-COMP:14412"/>
        <dbReference type="ChEBI" id="CHEBI:15378"/>
        <dbReference type="ChEBI" id="CHEBI:57705"/>
        <dbReference type="ChEBI" id="CHEBI:58223"/>
        <dbReference type="ChEBI" id="CHEBI:87079"/>
        <dbReference type="ChEBI" id="CHEBI:139581"/>
        <dbReference type="EC" id="2.4.1.148"/>
    </reaction>
</comment>
<comment type="catalytic activity">
    <reaction evidence="2">
        <text>a 3-O-[N-acetyl-beta-D-glucosaminyl-(1-&gt;3)-N-acetyl-alpha-D-galactosaminyl]-L-threonyl-[protein] + UDP-N-acetyl-alpha-D-glucosamine = 3-O-[N-acetyl-beta-D-glucosaminyl-(1-&gt;3)-[N-acetyl-beta-D-glucosaminyl-(1-&gt;6)]-N-acetyl-alpha-D-galactosaminyl]-L-threonyl-[protein] + UDP + H(+)</text>
        <dbReference type="Rhea" id="RHEA:56192"/>
        <dbReference type="Rhea" id="RHEA-COMP:11692"/>
        <dbReference type="Rhea" id="RHEA-COMP:14413"/>
        <dbReference type="ChEBI" id="CHEBI:15378"/>
        <dbReference type="ChEBI" id="CHEBI:57705"/>
        <dbReference type="ChEBI" id="CHEBI:58223"/>
        <dbReference type="ChEBI" id="CHEBI:87080"/>
        <dbReference type="ChEBI" id="CHEBI:139580"/>
        <dbReference type="EC" id="2.4.1.148"/>
    </reaction>
</comment>
<comment type="pathway">
    <text>Protein modification; protein glycosylation.</text>
</comment>
<comment type="subcellular location">
    <subcellularLocation>
        <location evidence="1">Golgi apparatus membrane</location>
        <topology evidence="1">Single-pass type II membrane protein</topology>
    </subcellularLocation>
</comment>
<comment type="PTM">
    <text evidence="1">N-glycosylated.</text>
</comment>
<comment type="similarity">
    <text evidence="4">Belongs to the glycosyltransferase 14 family.</text>
</comment>
<comment type="sequence caution" evidence="4">
    <conflict type="erroneous initiation">
        <sequence resource="EMBL-CDS" id="AAH18297"/>
    </conflict>
</comment>
<comment type="sequence caution" evidence="4">
    <conflict type="erroneous termination">
        <sequence resource="EMBL-CDS" id="BAB25548"/>
    </conflict>
    <text>Truncated C-terminus.</text>
</comment>
<comment type="online information" name="Functional Glycomics Gateway - GTase">
    <link uri="http://www.functionalglycomics.org/glycomics/molecule/jsp/glycoEnzyme/viewGlycoEnzyme.jsp?gbpId=gt_mou_575"/>
    <text>core 2 beta 6 GlcNAc T3</text>
</comment>
<proteinExistence type="evidence at transcript level"/>
<accession>Q5JCT0</accession>
<accession>A2TIK7</accession>
<accession>Q8VCX9</accession>
<accession>Q9D8A3</accession>
<evidence type="ECO:0000250" key="1"/>
<evidence type="ECO:0000250" key="2">
    <source>
        <dbReference type="UniProtKB" id="O95395"/>
    </source>
</evidence>
<evidence type="ECO:0000255" key="3"/>
<evidence type="ECO:0000305" key="4"/>
<organism>
    <name type="scientific">Mus musculus</name>
    <name type="common">Mouse</name>
    <dbReference type="NCBI Taxonomy" id="10090"/>
    <lineage>
        <taxon>Eukaryota</taxon>
        <taxon>Metazoa</taxon>
        <taxon>Chordata</taxon>
        <taxon>Craniata</taxon>
        <taxon>Vertebrata</taxon>
        <taxon>Euteleostomi</taxon>
        <taxon>Mammalia</taxon>
        <taxon>Eutheria</taxon>
        <taxon>Euarchontoglires</taxon>
        <taxon>Glires</taxon>
        <taxon>Rodentia</taxon>
        <taxon>Myomorpha</taxon>
        <taxon>Muroidea</taxon>
        <taxon>Muridae</taxon>
        <taxon>Murinae</taxon>
        <taxon>Mus</taxon>
        <taxon>Mus</taxon>
    </lineage>
</organism>
<dbReference type="EC" id="2.4.1.102" evidence="2"/>
<dbReference type="EC" id="2.4.1.148" evidence="2"/>
<dbReference type="EC" id="2.4.1.150" evidence="2"/>
<dbReference type="EMBL" id="AY039027">
    <property type="protein sequence ID" value="AAK72480.1"/>
    <property type="molecule type" value="mRNA"/>
</dbReference>
<dbReference type="EMBL" id="EF202835">
    <property type="protein sequence ID" value="ABM91120.1"/>
    <property type="molecule type" value="mRNA"/>
</dbReference>
<dbReference type="EMBL" id="AK008234">
    <property type="protein sequence ID" value="BAB25548.1"/>
    <property type="status" value="ALT_SEQ"/>
    <property type="molecule type" value="mRNA"/>
</dbReference>
<dbReference type="EMBL" id="BC018297">
    <property type="protein sequence ID" value="AAH18297.1"/>
    <property type="status" value="ALT_INIT"/>
    <property type="molecule type" value="mRNA"/>
</dbReference>
<dbReference type="CCDS" id="CCDS40678.1"/>
<dbReference type="RefSeq" id="NP_001419980.1">
    <property type="nucleotide sequence ID" value="NM_001433051.1"/>
</dbReference>
<dbReference type="RefSeq" id="NP_082363.2">
    <property type="nucleotide sequence ID" value="NM_028087.3"/>
</dbReference>
<dbReference type="RefSeq" id="XP_006511526.1">
    <property type="nucleotide sequence ID" value="XM_006511463.4"/>
</dbReference>
<dbReference type="RefSeq" id="XP_006511528.1">
    <property type="nucleotide sequence ID" value="XM_006511465.3"/>
</dbReference>
<dbReference type="RefSeq" id="XP_011241117.1">
    <property type="nucleotide sequence ID" value="XM_011242815.3"/>
</dbReference>
<dbReference type="RefSeq" id="XP_011241118.1">
    <property type="nucleotide sequence ID" value="XM_011242816.3"/>
</dbReference>
<dbReference type="RefSeq" id="XP_011241119.1">
    <property type="nucleotide sequence ID" value="XM_011242817.2"/>
</dbReference>
<dbReference type="RefSeq" id="XP_030100480.1">
    <property type="nucleotide sequence ID" value="XM_030244620.1"/>
</dbReference>
<dbReference type="RefSeq" id="XP_030100481.1">
    <property type="nucleotide sequence ID" value="XM_030244621.1"/>
</dbReference>
<dbReference type="SMR" id="Q5JCT0"/>
<dbReference type="FunCoup" id="Q5JCT0">
    <property type="interactions" value="31"/>
</dbReference>
<dbReference type="STRING" id="10090.ENSMUSP00000034751"/>
<dbReference type="CAZy" id="GT14">
    <property type="family name" value="Glycosyltransferase Family 14"/>
</dbReference>
<dbReference type="GlyCosmos" id="Q5JCT0">
    <property type="glycosylation" value="1 site, No reported glycans"/>
</dbReference>
<dbReference type="GlyGen" id="Q5JCT0">
    <property type="glycosylation" value="1 site"/>
</dbReference>
<dbReference type="PhosphoSitePlus" id="Q5JCT0"/>
<dbReference type="PaxDb" id="10090-ENSMUSP00000034751"/>
<dbReference type="PeptideAtlas" id="Q5JCT0"/>
<dbReference type="ProteomicsDB" id="268859"/>
<dbReference type="Antibodypedia" id="2476">
    <property type="antibodies" value="385 antibodies from 31 providers"/>
</dbReference>
<dbReference type="DNASU" id="72077"/>
<dbReference type="Ensembl" id="ENSMUST00000034751.6">
    <property type="protein sequence ID" value="ENSMUSP00000034751.6"/>
    <property type="gene ID" value="ENSMUSG00000032226.6"/>
</dbReference>
<dbReference type="GeneID" id="72077"/>
<dbReference type="KEGG" id="mmu:72077"/>
<dbReference type="UCSC" id="uc009qnt.1">
    <property type="organism name" value="mouse"/>
</dbReference>
<dbReference type="AGR" id="MGI:1919327"/>
<dbReference type="CTD" id="9245"/>
<dbReference type="MGI" id="MGI:1919327">
    <property type="gene designation" value="Gcnt3"/>
</dbReference>
<dbReference type="VEuPathDB" id="HostDB:ENSMUSG00000032226"/>
<dbReference type="eggNOG" id="KOG0799">
    <property type="taxonomic scope" value="Eukaryota"/>
</dbReference>
<dbReference type="GeneTree" id="ENSGT00940000159331"/>
<dbReference type="HOGENOM" id="CLU_032341_1_2_1"/>
<dbReference type="InParanoid" id="Q5JCT0"/>
<dbReference type="OMA" id="NMTRDCE"/>
<dbReference type="OrthoDB" id="2019572at2759"/>
<dbReference type="PhylomeDB" id="Q5JCT0"/>
<dbReference type="TreeFam" id="TF315534"/>
<dbReference type="BRENDA" id="2.4.1.102">
    <property type="organism ID" value="3474"/>
</dbReference>
<dbReference type="BRENDA" id="2.4.1.150">
    <property type="organism ID" value="3474"/>
</dbReference>
<dbReference type="Reactome" id="R-MMU-913709">
    <property type="pathway name" value="O-linked glycosylation of mucins"/>
</dbReference>
<dbReference type="UniPathway" id="UPA00378"/>
<dbReference type="BioGRID-ORCS" id="72077">
    <property type="hits" value="4 hits in 80 CRISPR screens"/>
</dbReference>
<dbReference type="ChiTaRS" id="Gcnt3">
    <property type="organism name" value="mouse"/>
</dbReference>
<dbReference type="PRO" id="PR:Q5JCT0"/>
<dbReference type="Proteomes" id="UP000000589">
    <property type="component" value="Chromosome 9"/>
</dbReference>
<dbReference type="RNAct" id="Q5JCT0">
    <property type="molecule type" value="protein"/>
</dbReference>
<dbReference type="Bgee" id="ENSMUSG00000032226">
    <property type="expression patterns" value="Expressed in epithelium of stomach and 45 other cell types or tissues"/>
</dbReference>
<dbReference type="GO" id="GO:0000139">
    <property type="term" value="C:Golgi membrane"/>
    <property type="evidence" value="ECO:0007669"/>
    <property type="project" value="UniProtKB-SubCell"/>
</dbReference>
<dbReference type="GO" id="GO:0047225">
    <property type="term" value="F:acetylgalactosaminyl-O-glycosyl-glycoprotein beta-1,6-N-acetylglucosaminyltransferase activity"/>
    <property type="evidence" value="ECO:0000315"/>
    <property type="project" value="MGI"/>
</dbReference>
<dbReference type="GO" id="GO:0008375">
    <property type="term" value="F:acetylglucosaminyltransferase activity"/>
    <property type="evidence" value="ECO:0000266"/>
    <property type="project" value="MGI"/>
</dbReference>
<dbReference type="GO" id="GO:0003829">
    <property type="term" value="F:beta-1,3-galactosyl-O-glycosyl-glycoprotein beta-1,6-N-acetylglucosaminyltransferase activity"/>
    <property type="evidence" value="ECO:0007669"/>
    <property type="project" value="UniProtKB-EC"/>
</dbReference>
<dbReference type="GO" id="GO:0008109">
    <property type="term" value="F:N-acetyllactosaminide beta-1,6-N-acetylglucosaminyltransferase activity"/>
    <property type="evidence" value="ECO:0007669"/>
    <property type="project" value="UniProtKB-EC"/>
</dbReference>
<dbReference type="GO" id="GO:0050892">
    <property type="term" value="P:intestinal absorption"/>
    <property type="evidence" value="ECO:0000315"/>
    <property type="project" value="MGI"/>
</dbReference>
<dbReference type="GO" id="GO:0060993">
    <property type="term" value="P:kidney morphogenesis"/>
    <property type="evidence" value="ECO:0000316"/>
    <property type="project" value="MGI"/>
</dbReference>
<dbReference type="GO" id="GO:0006493">
    <property type="term" value="P:protein O-linked glycosylation"/>
    <property type="evidence" value="ECO:0000266"/>
    <property type="project" value="MGI"/>
</dbReference>
<dbReference type="GO" id="GO:0048729">
    <property type="term" value="P:tissue morphogenesis"/>
    <property type="evidence" value="ECO:0000316"/>
    <property type="project" value="MGI"/>
</dbReference>
<dbReference type="InterPro" id="IPR003406">
    <property type="entry name" value="Glyco_trans_14"/>
</dbReference>
<dbReference type="PANTHER" id="PTHR19297:SF81">
    <property type="entry name" value="BETA-1,3-GALACTOSYL-O-GLYCOSYL-GLYCOPROTEIN BETA-1,6-N-ACETYLGLUCOSAMINYLTRANSFERASE 3"/>
    <property type="match status" value="1"/>
</dbReference>
<dbReference type="PANTHER" id="PTHR19297">
    <property type="entry name" value="GLYCOSYLTRANSFERASE 14 FAMILY MEMBER"/>
    <property type="match status" value="1"/>
</dbReference>
<dbReference type="Pfam" id="PF02485">
    <property type="entry name" value="Branch"/>
    <property type="match status" value="1"/>
</dbReference>
<reference key="1">
    <citation type="submission" date="2001-06" db="EMBL/GenBank/DDBJ databases">
        <title>Core 2 beta-1,6-N-acetylglucosaminyltransferase II (Core2-GlcNAcT-II).</title>
        <authorList>
            <person name="Yeh J.-C."/>
            <person name="Ong E."/>
            <person name="Fukuda M."/>
        </authorList>
    </citation>
    <scope>NUCLEOTIDE SEQUENCE [MRNA]</scope>
</reference>
<reference key="2">
    <citation type="submission" date="2006-12" db="EMBL/GenBank/DDBJ databases">
        <title>Mucin biosynthesis: molecular cloning and expression of mouse mucus-type core 2 beta-1,6 N-acetylglucosaminyltransferase.</title>
        <authorList>
            <person name="Hashimoto M."/>
            <person name="Tan S."/>
            <person name="Mori N."/>
            <person name="Cheng H."/>
            <person name="Cheng P.-W."/>
        </authorList>
    </citation>
    <scope>NUCLEOTIDE SEQUENCE [MRNA]</scope>
    <source>
        <strain>C57BL/6J</strain>
        <tissue>Colon</tissue>
    </source>
</reference>
<reference key="3">
    <citation type="journal article" date="2005" name="Science">
        <title>The transcriptional landscape of the mammalian genome.</title>
        <authorList>
            <person name="Carninci P."/>
            <person name="Kasukawa T."/>
            <person name="Katayama S."/>
            <person name="Gough J."/>
            <person name="Frith M.C."/>
            <person name="Maeda N."/>
            <person name="Oyama R."/>
            <person name="Ravasi T."/>
            <person name="Lenhard B."/>
            <person name="Wells C."/>
            <person name="Kodzius R."/>
            <person name="Shimokawa K."/>
            <person name="Bajic V.B."/>
            <person name="Brenner S.E."/>
            <person name="Batalov S."/>
            <person name="Forrest A.R."/>
            <person name="Zavolan M."/>
            <person name="Davis M.J."/>
            <person name="Wilming L.G."/>
            <person name="Aidinis V."/>
            <person name="Allen J.E."/>
            <person name="Ambesi-Impiombato A."/>
            <person name="Apweiler R."/>
            <person name="Aturaliya R.N."/>
            <person name="Bailey T.L."/>
            <person name="Bansal M."/>
            <person name="Baxter L."/>
            <person name="Beisel K.W."/>
            <person name="Bersano T."/>
            <person name="Bono H."/>
            <person name="Chalk A.M."/>
            <person name="Chiu K.P."/>
            <person name="Choudhary V."/>
            <person name="Christoffels A."/>
            <person name="Clutterbuck D.R."/>
            <person name="Crowe M.L."/>
            <person name="Dalla E."/>
            <person name="Dalrymple B.P."/>
            <person name="de Bono B."/>
            <person name="Della Gatta G."/>
            <person name="di Bernardo D."/>
            <person name="Down T."/>
            <person name="Engstrom P."/>
            <person name="Fagiolini M."/>
            <person name="Faulkner G."/>
            <person name="Fletcher C.F."/>
            <person name="Fukushima T."/>
            <person name="Furuno M."/>
            <person name="Futaki S."/>
            <person name="Gariboldi M."/>
            <person name="Georgii-Hemming P."/>
            <person name="Gingeras T.R."/>
            <person name="Gojobori T."/>
            <person name="Green R.E."/>
            <person name="Gustincich S."/>
            <person name="Harbers M."/>
            <person name="Hayashi Y."/>
            <person name="Hensch T.K."/>
            <person name="Hirokawa N."/>
            <person name="Hill D."/>
            <person name="Huminiecki L."/>
            <person name="Iacono M."/>
            <person name="Ikeo K."/>
            <person name="Iwama A."/>
            <person name="Ishikawa T."/>
            <person name="Jakt M."/>
            <person name="Kanapin A."/>
            <person name="Katoh M."/>
            <person name="Kawasawa Y."/>
            <person name="Kelso J."/>
            <person name="Kitamura H."/>
            <person name="Kitano H."/>
            <person name="Kollias G."/>
            <person name="Krishnan S.P."/>
            <person name="Kruger A."/>
            <person name="Kummerfeld S.K."/>
            <person name="Kurochkin I.V."/>
            <person name="Lareau L.F."/>
            <person name="Lazarevic D."/>
            <person name="Lipovich L."/>
            <person name="Liu J."/>
            <person name="Liuni S."/>
            <person name="McWilliam S."/>
            <person name="Madan Babu M."/>
            <person name="Madera M."/>
            <person name="Marchionni L."/>
            <person name="Matsuda H."/>
            <person name="Matsuzawa S."/>
            <person name="Miki H."/>
            <person name="Mignone F."/>
            <person name="Miyake S."/>
            <person name="Morris K."/>
            <person name="Mottagui-Tabar S."/>
            <person name="Mulder N."/>
            <person name="Nakano N."/>
            <person name="Nakauchi H."/>
            <person name="Ng P."/>
            <person name="Nilsson R."/>
            <person name="Nishiguchi S."/>
            <person name="Nishikawa S."/>
            <person name="Nori F."/>
            <person name="Ohara O."/>
            <person name="Okazaki Y."/>
            <person name="Orlando V."/>
            <person name="Pang K.C."/>
            <person name="Pavan W.J."/>
            <person name="Pavesi G."/>
            <person name="Pesole G."/>
            <person name="Petrovsky N."/>
            <person name="Piazza S."/>
            <person name="Reed J."/>
            <person name="Reid J.F."/>
            <person name="Ring B.Z."/>
            <person name="Ringwald M."/>
            <person name="Rost B."/>
            <person name="Ruan Y."/>
            <person name="Salzberg S.L."/>
            <person name="Sandelin A."/>
            <person name="Schneider C."/>
            <person name="Schoenbach C."/>
            <person name="Sekiguchi K."/>
            <person name="Semple C.A."/>
            <person name="Seno S."/>
            <person name="Sessa L."/>
            <person name="Sheng Y."/>
            <person name="Shibata Y."/>
            <person name="Shimada H."/>
            <person name="Shimada K."/>
            <person name="Silva D."/>
            <person name="Sinclair B."/>
            <person name="Sperling S."/>
            <person name="Stupka E."/>
            <person name="Sugiura K."/>
            <person name="Sultana R."/>
            <person name="Takenaka Y."/>
            <person name="Taki K."/>
            <person name="Tammoja K."/>
            <person name="Tan S.L."/>
            <person name="Tang S."/>
            <person name="Taylor M.S."/>
            <person name="Tegner J."/>
            <person name="Teichmann S.A."/>
            <person name="Ueda H.R."/>
            <person name="van Nimwegen E."/>
            <person name="Verardo R."/>
            <person name="Wei C.L."/>
            <person name="Yagi K."/>
            <person name="Yamanishi H."/>
            <person name="Zabarovsky E."/>
            <person name="Zhu S."/>
            <person name="Zimmer A."/>
            <person name="Hide W."/>
            <person name="Bult C."/>
            <person name="Grimmond S.M."/>
            <person name="Teasdale R.D."/>
            <person name="Liu E.T."/>
            <person name="Brusic V."/>
            <person name="Quackenbush J."/>
            <person name="Wahlestedt C."/>
            <person name="Mattick J.S."/>
            <person name="Hume D.A."/>
            <person name="Kai C."/>
            <person name="Sasaki D."/>
            <person name="Tomaru Y."/>
            <person name="Fukuda S."/>
            <person name="Kanamori-Katayama M."/>
            <person name="Suzuki M."/>
            <person name="Aoki J."/>
            <person name="Arakawa T."/>
            <person name="Iida J."/>
            <person name="Imamura K."/>
            <person name="Itoh M."/>
            <person name="Kato T."/>
            <person name="Kawaji H."/>
            <person name="Kawagashira N."/>
            <person name="Kawashima T."/>
            <person name="Kojima M."/>
            <person name="Kondo S."/>
            <person name="Konno H."/>
            <person name="Nakano K."/>
            <person name="Ninomiya N."/>
            <person name="Nishio T."/>
            <person name="Okada M."/>
            <person name="Plessy C."/>
            <person name="Shibata K."/>
            <person name="Shiraki T."/>
            <person name="Suzuki S."/>
            <person name="Tagami M."/>
            <person name="Waki K."/>
            <person name="Watahiki A."/>
            <person name="Okamura-Oho Y."/>
            <person name="Suzuki H."/>
            <person name="Kawai J."/>
            <person name="Hayashizaki Y."/>
        </authorList>
    </citation>
    <scope>NUCLEOTIDE SEQUENCE [LARGE SCALE MRNA]</scope>
    <source>
        <strain>C57BL/6J</strain>
        <tissue>Small intestine</tissue>
    </source>
</reference>
<reference key="4">
    <citation type="journal article" date="2004" name="Genome Res.">
        <title>The status, quality, and expansion of the NIH full-length cDNA project: the Mammalian Gene Collection (MGC).</title>
        <authorList>
            <consortium name="The MGC Project Team"/>
        </authorList>
    </citation>
    <scope>NUCLEOTIDE SEQUENCE [LARGE SCALE MRNA]</scope>
    <source>
        <strain>FVB/N</strain>
        <tissue>Colon</tissue>
    </source>
</reference>